<proteinExistence type="inferred from homology"/>
<reference key="1">
    <citation type="journal article" date="1987" name="Nucleic Acids Res.">
        <title>The nucleotide sequence of the tnpA gene of Tn21.</title>
        <authorList>
            <person name="Ward E."/>
            <person name="Grinsted J."/>
        </authorList>
    </citation>
    <scope>NUCLEOTIDE SEQUENCE [GENOMIC DNA]</scope>
</reference>
<reference key="2">
    <citation type="journal article" date="1985" name="Cell">
        <title>tnpM: a novel regulatory gene that enhances Tn21 transposition and suppresses cointegrate resolution.</title>
        <authorList>
            <person name="Hyde D.R."/>
            <person name="Tu C.-P.T."/>
        </authorList>
    </citation>
    <scope>NUCLEOTIDE SEQUENCE [GENOMIC DNA] OF 1-44</scope>
</reference>
<reference key="3">
    <citation type="journal article" date="1983" name="Mol. Gen. Genet.">
        <title>DNA sequences of and complementation by the tnpR genes of Tn21, Tn501 and Tn1721.</title>
        <authorList>
            <person name="Diver W.P."/>
            <person name="Grinsted J."/>
            <person name="Fritzinger D.C."/>
            <person name="Brown N.L."/>
            <person name="Altenbuchner J."/>
            <person name="Rogowsky P."/>
            <person name="Schmitt R."/>
        </authorList>
    </citation>
    <scope>NUCLEOTIDE SEQUENCE [GENOMIC DNA] OF 1-14</scope>
</reference>
<name>TNP2_ECOLX</name>
<keyword id="KW-0233">DNA recombination</keyword>
<keyword id="KW-0238">DNA-binding</keyword>
<keyword id="KW-0814">Transposable element</keyword>
<keyword id="KW-0815">Transposition</keyword>
<sequence>MPRRSILSAAERESLLALPDSKDDLIRHYTFNDTDLSIIRQRRGPANRLGFAVQLCYLRFPGVILGVDELPFPPLLKPVADQPKVGVESWNEYGQREQTRREHLSELQTVFGFRPFTMSHYRQAVQMLTELAMQTDKGIVLASALIGHLRRQSVILPALNAVERASAEAITRANRRIYDALAEPLADAHRRRLDDLLKRRDNGKTTWLAWLRQSPAKPNSRHMLEHIERLKAWQALDLPTGIERLVHQNRLLKIAREGGQMTPADLAKFEPQRRYATLVALATEGMATVTDEIIDLHDRILGKLFNAAKNKHQQQFQASGKAINAKVRLYGRIGQALIDAKQSGRDAFAAIEAVMSWDSFAESVTEAQKLAQPGGFGFLHRIGESYATLRRYAPEFLAVLKLRAAPAAKNVLDAIEVLRGMNTDNARKLPADAPTGFIKPRWQKLVMTDAGIDRAYYELCALSELKNSLRSGDIWVQGSRQFKDFEDYLVPPEKFTSLKQSSELPLAVATGCEQYLHERLTLLEAQLATVNRMAAANDLPDAIITESGLKITPLDAAVPDTAQALIDQTAMVLPHVKITELLLEVDEWTGFTRHFTHLKSGDLAKDKNLLLTTILADAINLGLTKMAESCPGTTYAKLAWLQAWHTRDETYSTALAELVNAQFRHPFAGHWGDGTTSSSDEQNFRTASKAKSTGHINPKYGSSPGRTFYTHISDQYAPFHTKVVNVGLRDSTYVLDDLLYHESDLRIEEHYTDTAGFTDHVFALMHLLGFRFAPRIRDLGDTKLYIPKGDAAYDALKPMIGGTLNIKHVRAHWDEILRLATSIKQGTVTASLMLRKLGSYPRQNGLAVALRELGRVERTLFILDWLQGVELRRRVHAGLNKGEARNALARAVFFNRLGEIRDRSFEQQRYRASGLNLVTAAIVLWNTVYLERAAHALRGNGHAVDDSLLQYLSPLGWEHINLTGDYLWRSSAKIGAGKFRPLRPLQPA</sequence>
<organism>
    <name type="scientific">Escherichia coli</name>
    <dbReference type="NCBI Taxonomy" id="562"/>
    <lineage>
        <taxon>Bacteria</taxon>
        <taxon>Pseudomonadati</taxon>
        <taxon>Pseudomonadota</taxon>
        <taxon>Gammaproteobacteria</taxon>
        <taxon>Enterobacterales</taxon>
        <taxon>Enterobacteriaceae</taxon>
        <taxon>Escherichia</taxon>
    </lineage>
</organism>
<gene>
    <name type="primary">tnpA</name>
</gene>
<evidence type="ECO:0000256" key="1">
    <source>
        <dbReference type="SAM" id="MobiDB-lite"/>
    </source>
</evidence>
<evidence type="ECO:0000305" key="2"/>
<protein>
    <recommendedName>
        <fullName>Transposase for transposon Tn21</fullName>
    </recommendedName>
</protein>
<dbReference type="EMBL" id="X04891">
    <property type="protein sequence ID" value="CAA28579.1"/>
    <property type="molecule type" value="Genomic_DNA"/>
</dbReference>
<dbReference type="EMBL" id="M10791">
    <property type="protein sequence ID" value="AAA27422.1"/>
    <property type="molecule type" value="Genomic_DNA"/>
</dbReference>
<dbReference type="EMBL" id="X01298">
    <property type="protein sequence ID" value="CAA25627.1"/>
    <property type="molecule type" value="Genomic_DNA"/>
</dbReference>
<dbReference type="PIR" id="A26673">
    <property type="entry name" value="TQEC21"/>
</dbReference>
<dbReference type="SMR" id="P06694"/>
<dbReference type="GO" id="GO:0003677">
    <property type="term" value="F:DNA binding"/>
    <property type="evidence" value="ECO:0007669"/>
    <property type="project" value="UniProtKB-KW"/>
</dbReference>
<dbReference type="GO" id="GO:0004803">
    <property type="term" value="F:transposase activity"/>
    <property type="evidence" value="ECO:0007669"/>
    <property type="project" value="InterPro"/>
</dbReference>
<dbReference type="GO" id="GO:0006313">
    <property type="term" value="P:DNA transposition"/>
    <property type="evidence" value="ECO:0007669"/>
    <property type="project" value="InterPro"/>
</dbReference>
<dbReference type="InterPro" id="IPR025296">
    <property type="entry name" value="DUF4158"/>
</dbReference>
<dbReference type="InterPro" id="IPR047653">
    <property type="entry name" value="Tn3-like_transpos"/>
</dbReference>
<dbReference type="InterPro" id="IPR002513">
    <property type="entry name" value="Tn3_Tnp_DDE_dom"/>
</dbReference>
<dbReference type="NCBIfam" id="NF033527">
    <property type="entry name" value="transpos_Tn3"/>
    <property type="match status" value="1"/>
</dbReference>
<dbReference type="Pfam" id="PF01526">
    <property type="entry name" value="DDE_Tnp_Tn3"/>
    <property type="match status" value="1"/>
</dbReference>
<dbReference type="Pfam" id="PF13700">
    <property type="entry name" value="DUF4158"/>
    <property type="match status" value="1"/>
</dbReference>
<feature type="chain" id="PRO_0000075428" description="Transposase for transposon Tn21">
    <location>
        <begin position="1"/>
        <end position="988"/>
    </location>
</feature>
<feature type="region of interest" description="Disordered" evidence="1">
    <location>
        <begin position="672"/>
        <end position="696"/>
    </location>
</feature>
<feature type="compositionally biased region" description="Polar residues" evidence="1">
    <location>
        <begin position="674"/>
        <end position="695"/>
    </location>
</feature>
<comment type="function">
    <text>Required for transposition of transposon Tn21.</text>
</comment>
<comment type="miscellaneous">
    <text>Tn21 is a transposon encoding resistance to sulfonamide, streptomycin, and mercuric ion.</text>
</comment>
<comment type="similarity">
    <text evidence="2">Belongs to the transposase 7 family.</text>
</comment>
<accession>P06694</accession>